<comment type="function">
    <text evidence="6">May act as a transcriptional coregulator during muscle development through its interaction with SNW1. Has lost its ancestral function as a Na,K-ATPase beta-subunit.</text>
</comment>
<comment type="subunit">
    <text evidence="1">Associates with a SMAD7-transcriptional complex. Interacts with SNW1 and TOR1AIP1 (By similarity). According to PubMed:17592128, does not associate with known Na,K-ATPase alpha-subunits.</text>
</comment>
<comment type="interaction">
    <interactant intactId="EBI-12894731">
        <id>Q9UN42</id>
    </interactant>
    <interactant intactId="EBI-1172335">
        <id>P07306</id>
        <label>ASGR1</label>
    </interactant>
    <organismsDiffer>false</organismsDiffer>
    <experiments>3</experiments>
</comment>
<comment type="interaction">
    <interactant intactId="EBI-12894731">
        <id>Q9UN42</id>
    </interactant>
    <interactant intactId="EBI-10267100">
        <id>Q8N6G5</id>
        <label>CSGALNACT2</label>
    </interactant>
    <organismsDiffer>false</organismsDiffer>
    <experiments>3</experiments>
</comment>
<comment type="interaction">
    <interactant intactId="EBI-12894731">
        <id>Q9UN42</id>
    </interactant>
    <interactant intactId="EBI-3911467">
        <id>Q07325</id>
        <label>CXCL9</label>
    </interactant>
    <organismsDiffer>false</organismsDiffer>
    <experiments>3</experiments>
</comment>
<comment type="interaction">
    <interactant intactId="EBI-12894731">
        <id>Q9UN42</id>
    </interactant>
    <interactant intactId="EBI-10976398">
        <id>Q7Z2K6</id>
        <label>ERMP1</label>
    </interactant>
    <organismsDiffer>false</organismsDiffer>
    <experiments>3</experiments>
</comment>
<comment type="interaction">
    <interactant intactId="EBI-12894731">
        <id>Q9UN42</id>
    </interactant>
    <interactant intactId="EBI-741850">
        <id>Q9BZL3</id>
        <label>SMIM3</label>
    </interactant>
    <organismsDiffer>false</organismsDiffer>
    <experiments>3</experiments>
</comment>
<comment type="interaction">
    <interactant intactId="EBI-12894731">
        <id>Q9UN42</id>
    </interactant>
    <interactant intactId="EBI-3914288">
        <id>O60636</id>
        <label>TSPAN2</label>
    </interactant>
    <organismsDiffer>false</organismsDiffer>
    <experiments>3</experiments>
</comment>
<comment type="interaction">
    <interactant intactId="EBI-12894731">
        <id>Q9UN42</id>
    </interactant>
    <interactant intactId="EBI-10243654">
        <id>Q5BVD1</id>
        <label>TTMP</label>
    </interactant>
    <organismsDiffer>false</organismsDiffer>
    <experiments>3</experiments>
</comment>
<comment type="interaction">
    <interactant intactId="EBI-12894731">
        <id>Q9UN42</id>
    </interactant>
    <interactant intactId="EBI-2551848">
        <id>Q9CSN1</id>
        <label>Snw1</label>
    </interactant>
    <organismsDiffer>true</organismsDiffer>
    <experiments>2</experiments>
</comment>
<comment type="subcellular location">
    <subcellularLocation>
        <location evidence="1">Nucleus inner membrane</location>
        <topology evidence="1">Single-pass type II membrane protein</topology>
    </subcellularLocation>
    <text evidence="5 6">Detected in nuclear envelops.</text>
</comment>
<comment type="alternative products">
    <event type="alternative splicing"/>
    <isoform>
        <id>Q9UN42-1</id>
        <name>A</name>
        <sequence type="displayed"/>
    </isoform>
    <isoform>
        <id>Q9UN42-2</id>
        <name>B</name>
        <sequence type="described" ref="VSP_000351"/>
    </isoform>
</comment>
<comment type="tissue specificity">
    <text evidence="4">Highly expressed in skeletal muscle and at a lower level in heart.</text>
</comment>
<comment type="similarity">
    <text evidence="8">Belongs to the X(+)/potassium ATPases subunit beta family.</text>
</comment>
<sequence>MRRQLRSRRAPSFPYSYRYRLDDPDEANQNYLADEEEEAEEEARVTVVPKSEEEEEEEEKEEEEEEEKEEEEGQGQPTGNAWWQKLQIMSEYLWDPERRMFLARTGQSWSLILLIYFFFYASLAAVITLCMYTLFLTISPYIPTFTERVKPPGVMIRPFAHSLNFNFNVSEPDTWQHYVISLNGFLQGYNDSLQEEMNVDCPPGQYFIQDGNEDEDKKACQFKRSFLKNCSGLEDPTFGYSTGQPCILLKMNRIVGFRPELGDPVKVSCKVQRGDENDIRSISYYPESASFDLRYYPYYGKLTHVNYTSPLVAMHFTDVVKNQAVPVQCQLKGKGVINDVINDRFVGRVIFTLNIET</sequence>
<reference key="1">
    <citation type="journal article" date="1999" name="FEBS Lett.">
        <title>Identification of a novel gene of the X,K-ATPase beta-subunit family that is predominantly expressed in skeletal and heart muscles.</title>
        <authorList>
            <person name="Pestov N.B."/>
            <person name="Adams G."/>
            <person name="Shakhparonov M.I."/>
            <person name="Modyanov N.N."/>
        </authorList>
    </citation>
    <scope>NUCLEOTIDE SEQUENCE [MRNA] (ISOFORMS A AND B)</scope>
    <scope>TISSUE SPECIFICITY</scope>
    <source>
        <tissue>Skeletal muscle</tissue>
    </source>
</reference>
<reference key="2">
    <citation type="journal article" date="2004" name="Genome Res.">
        <title>The status, quality, and expansion of the NIH full-length cDNA project: the Mammalian Gene Collection (MGC).</title>
        <authorList>
            <consortium name="The MGC Project Team"/>
        </authorList>
    </citation>
    <scope>NUCLEOTIDE SEQUENCE [LARGE SCALE MRNA] (ISOFORM A)</scope>
</reference>
<reference key="3">
    <citation type="journal article" date="2004" name="Am. J. Physiol.">
        <title>Accumulation of beta (m), a structural member of X,K-ATPase beta-subunit family, in nuclear envelopes of perinatal myocytes.</title>
        <authorList>
            <person name="Zhao H."/>
            <person name="Pestov N.B."/>
            <person name="Korneenko T.V."/>
            <person name="Shakhparonov M.I."/>
            <person name="Modyanov N.N."/>
        </authorList>
    </citation>
    <scope>SUBCELLULAR LOCATION</scope>
</reference>
<reference key="4">
    <citation type="journal article" date="2007" name="Proc. Natl. Acad. Sci. U.S.A.">
        <title>Evolution of Na,K-ATPase betam-subunit into a coregulator of transcription in placental mammals.</title>
        <authorList>
            <person name="Pestov N.B."/>
            <person name="Ahmad N."/>
            <person name="Korneenko T.V."/>
            <person name="Zhao H."/>
            <person name="Radkov R."/>
            <person name="Schaer D."/>
            <person name="Roy S."/>
            <person name="Bibert S."/>
            <person name="Geering K."/>
            <person name="Modyanov N.N."/>
        </authorList>
    </citation>
    <scope>FUNCTION</scope>
    <scope>SUBCELLULAR LOCATION</scope>
</reference>
<proteinExistence type="evidence at protein level"/>
<organism>
    <name type="scientific">Homo sapiens</name>
    <name type="common">Human</name>
    <dbReference type="NCBI Taxonomy" id="9606"/>
    <lineage>
        <taxon>Eukaryota</taxon>
        <taxon>Metazoa</taxon>
        <taxon>Chordata</taxon>
        <taxon>Craniata</taxon>
        <taxon>Vertebrata</taxon>
        <taxon>Euteleostomi</taxon>
        <taxon>Mammalia</taxon>
        <taxon>Eutheria</taxon>
        <taxon>Euarchontoglires</taxon>
        <taxon>Primates</taxon>
        <taxon>Haplorrhini</taxon>
        <taxon>Catarrhini</taxon>
        <taxon>Hominidae</taxon>
        <taxon>Homo</taxon>
    </lineage>
</organism>
<accession>Q9UN42</accession>
<accession>Q17RR0</accession>
<accession>Q9UN41</accession>
<protein>
    <recommendedName>
        <fullName>Protein ATP1B4</fullName>
    </recommendedName>
    <alternativeName>
        <fullName>X,K-ATPase subunit beta-m</fullName>
    </alternativeName>
    <alternativeName>
        <fullName>X/potassium-transporting ATPase subunit beta-m</fullName>
    </alternativeName>
</protein>
<keyword id="KW-0025">Alternative splicing</keyword>
<keyword id="KW-0472">Membrane</keyword>
<keyword id="KW-0539">Nucleus</keyword>
<keyword id="KW-1267">Proteomics identification</keyword>
<keyword id="KW-1185">Reference proteome</keyword>
<keyword id="KW-0735">Signal-anchor</keyword>
<keyword id="KW-0804">Transcription</keyword>
<keyword id="KW-0805">Transcription regulation</keyword>
<keyword id="KW-0812">Transmembrane</keyword>
<keyword id="KW-1133">Transmembrane helix</keyword>
<dbReference type="EMBL" id="AF158383">
    <property type="protein sequence ID" value="AAD49692.1"/>
    <property type="molecule type" value="mRNA"/>
</dbReference>
<dbReference type="EMBL" id="AF158384">
    <property type="protein sequence ID" value="AAD49693.1"/>
    <property type="molecule type" value="mRNA"/>
</dbReference>
<dbReference type="EMBL" id="BC117227">
    <property type="protein sequence ID" value="AAI17228.1"/>
    <property type="molecule type" value="mRNA"/>
</dbReference>
<dbReference type="CCDS" id="CCDS14598.1">
    <molecule id="Q9UN42-2"/>
</dbReference>
<dbReference type="CCDS" id="CCDS48158.1">
    <molecule id="Q9UN42-1"/>
</dbReference>
<dbReference type="RefSeq" id="NP_001135919.1">
    <molecule id="Q9UN42-1"/>
    <property type="nucleotide sequence ID" value="NM_001142447.3"/>
</dbReference>
<dbReference type="RefSeq" id="NP_036201.1">
    <molecule id="Q9UN42-2"/>
    <property type="nucleotide sequence ID" value="NM_012069.5"/>
</dbReference>
<dbReference type="SMR" id="Q9UN42"/>
<dbReference type="BioGRID" id="117007">
    <property type="interactions" value="61"/>
</dbReference>
<dbReference type="DIP" id="DIP-60961N"/>
<dbReference type="FunCoup" id="Q9UN42">
    <property type="interactions" value="1008"/>
</dbReference>
<dbReference type="IntAct" id="Q9UN42">
    <property type="interactions" value="41"/>
</dbReference>
<dbReference type="STRING" id="9606.ENSP00000218008"/>
<dbReference type="iPTMnet" id="Q9UN42"/>
<dbReference type="PhosphoSitePlus" id="Q9UN42"/>
<dbReference type="BioMuta" id="ATP1B4"/>
<dbReference type="DMDM" id="17367154"/>
<dbReference type="MassIVE" id="Q9UN42"/>
<dbReference type="PaxDb" id="9606-ENSP00000218008"/>
<dbReference type="PeptideAtlas" id="Q9UN42"/>
<dbReference type="ProteomicsDB" id="85249">
    <molecule id="Q9UN42-1"/>
</dbReference>
<dbReference type="ProteomicsDB" id="85250">
    <molecule id="Q9UN42-2"/>
</dbReference>
<dbReference type="Antibodypedia" id="44620">
    <property type="antibodies" value="47 antibodies from 13 providers"/>
</dbReference>
<dbReference type="DNASU" id="23439"/>
<dbReference type="Ensembl" id="ENST00000218008.8">
    <molecule id="Q9UN42-1"/>
    <property type="protein sequence ID" value="ENSP00000218008.3"/>
    <property type="gene ID" value="ENSG00000101892.12"/>
</dbReference>
<dbReference type="Ensembl" id="ENST00000361319.3">
    <molecule id="Q9UN42-2"/>
    <property type="protein sequence ID" value="ENSP00000355346.3"/>
    <property type="gene ID" value="ENSG00000101892.12"/>
</dbReference>
<dbReference type="GeneID" id="23439"/>
<dbReference type="KEGG" id="hsa:23439"/>
<dbReference type="MANE-Select" id="ENST00000218008.8">
    <property type="protein sequence ID" value="ENSP00000218008.3"/>
    <property type="RefSeq nucleotide sequence ID" value="NM_001142447.3"/>
    <property type="RefSeq protein sequence ID" value="NP_001135919.1"/>
</dbReference>
<dbReference type="UCSC" id="uc004esq.4">
    <molecule id="Q9UN42-1"/>
    <property type="organism name" value="human"/>
</dbReference>
<dbReference type="AGR" id="HGNC:808"/>
<dbReference type="CTD" id="23439"/>
<dbReference type="DisGeNET" id="23439"/>
<dbReference type="GeneCards" id="ATP1B4"/>
<dbReference type="HGNC" id="HGNC:808">
    <property type="gene designation" value="ATP1B4"/>
</dbReference>
<dbReference type="HPA" id="ENSG00000101892">
    <property type="expression patterns" value="Group enriched (skeletal muscle, tongue)"/>
</dbReference>
<dbReference type="MalaCards" id="ATP1B4"/>
<dbReference type="MIM" id="301073">
    <property type="type" value="gene"/>
</dbReference>
<dbReference type="neXtProt" id="NX_Q9UN42"/>
<dbReference type="OpenTargets" id="ENSG00000101892"/>
<dbReference type="PharmGKB" id="PA410"/>
<dbReference type="VEuPathDB" id="HostDB:ENSG00000101892"/>
<dbReference type="eggNOG" id="KOG3927">
    <property type="taxonomic scope" value="Eukaryota"/>
</dbReference>
<dbReference type="GeneTree" id="ENSGT01030000234579"/>
<dbReference type="HOGENOM" id="CLU_057702_1_0_1"/>
<dbReference type="InParanoid" id="Q9UN42"/>
<dbReference type="OMA" id="FGGCMFC"/>
<dbReference type="OrthoDB" id="5912413at2759"/>
<dbReference type="PAN-GO" id="Q9UN42">
    <property type="GO annotations" value="2 GO annotations based on evolutionary models"/>
</dbReference>
<dbReference type="PhylomeDB" id="Q9UN42"/>
<dbReference type="TreeFam" id="TF314618"/>
<dbReference type="PathwayCommons" id="Q9UN42"/>
<dbReference type="Reactome" id="R-HSA-2173795">
    <property type="pathway name" value="Downregulation of SMAD2/3:SMAD4 transcriptional activity"/>
</dbReference>
<dbReference type="SignaLink" id="Q9UN42"/>
<dbReference type="BioGRID-ORCS" id="23439">
    <property type="hits" value="12 hits in 769 CRISPR screens"/>
</dbReference>
<dbReference type="GenomeRNAi" id="23439"/>
<dbReference type="Pharos" id="Q9UN42">
    <property type="development level" value="Tdark"/>
</dbReference>
<dbReference type="PRO" id="PR:Q9UN42"/>
<dbReference type="Proteomes" id="UP000005640">
    <property type="component" value="Chromosome X"/>
</dbReference>
<dbReference type="RNAct" id="Q9UN42">
    <property type="molecule type" value="protein"/>
</dbReference>
<dbReference type="Bgee" id="ENSG00000101892">
    <property type="expression patterns" value="Expressed in skeletal muscle tissue of rectus abdominis and 49 other cell types or tissues"/>
</dbReference>
<dbReference type="ExpressionAtlas" id="Q9UN42">
    <property type="expression patterns" value="baseline and differential"/>
</dbReference>
<dbReference type="GO" id="GO:0005635">
    <property type="term" value="C:nuclear envelope"/>
    <property type="evidence" value="ECO:0000304"/>
    <property type="project" value="Reactome"/>
</dbReference>
<dbReference type="GO" id="GO:0005637">
    <property type="term" value="C:nuclear inner membrane"/>
    <property type="evidence" value="ECO:0000314"/>
    <property type="project" value="UniProtKB"/>
</dbReference>
<dbReference type="GO" id="GO:0005886">
    <property type="term" value="C:plasma membrane"/>
    <property type="evidence" value="ECO:0000304"/>
    <property type="project" value="ProtInc"/>
</dbReference>
<dbReference type="GO" id="GO:0005890">
    <property type="term" value="C:sodium:potassium-exchanging ATPase complex"/>
    <property type="evidence" value="ECO:0007669"/>
    <property type="project" value="InterPro"/>
</dbReference>
<dbReference type="GO" id="GO:0022890">
    <property type="term" value="F:inorganic cation transmembrane transporter activity"/>
    <property type="evidence" value="ECO:0000304"/>
    <property type="project" value="ProtInc"/>
</dbReference>
<dbReference type="GO" id="GO:0006813">
    <property type="term" value="P:potassium ion transport"/>
    <property type="evidence" value="ECO:0007669"/>
    <property type="project" value="InterPro"/>
</dbReference>
<dbReference type="GO" id="GO:0006355">
    <property type="term" value="P:regulation of DNA-templated transcription"/>
    <property type="evidence" value="ECO:0000314"/>
    <property type="project" value="UniProtKB"/>
</dbReference>
<dbReference type="GO" id="GO:0006814">
    <property type="term" value="P:sodium ion transport"/>
    <property type="evidence" value="ECO:0007669"/>
    <property type="project" value="InterPro"/>
</dbReference>
<dbReference type="FunFam" id="2.60.40.1660:FF:000001">
    <property type="entry name" value="Sodium/potassium-transporting ATPase subunit beta"/>
    <property type="match status" value="1"/>
</dbReference>
<dbReference type="Gene3D" id="2.60.40.1660">
    <property type="entry name" value="Na, k-atpase alpha subunit"/>
    <property type="match status" value="1"/>
</dbReference>
<dbReference type="InterPro" id="IPR000402">
    <property type="entry name" value="Na/K_ATPase_sub_beta"/>
</dbReference>
<dbReference type="InterPro" id="IPR038702">
    <property type="entry name" value="Na/K_ATPase_sub_beta_sf"/>
</dbReference>
<dbReference type="NCBIfam" id="TIGR01107">
    <property type="entry name" value="Na_K_ATPase_bet"/>
    <property type="match status" value="1"/>
</dbReference>
<dbReference type="PANTHER" id="PTHR11523:SF12">
    <property type="entry name" value="PROTEIN ATP1B4"/>
    <property type="match status" value="1"/>
</dbReference>
<dbReference type="PANTHER" id="PTHR11523">
    <property type="entry name" value="SODIUM/POTASSIUM-DEPENDENT ATPASE BETA SUBUNIT"/>
    <property type="match status" value="1"/>
</dbReference>
<dbReference type="Pfam" id="PF00287">
    <property type="entry name" value="Na_K-ATPase"/>
    <property type="match status" value="1"/>
</dbReference>
<dbReference type="PROSITE" id="PS00390">
    <property type="entry name" value="ATPASE_NA_K_BETA_1"/>
    <property type="match status" value="1"/>
</dbReference>
<dbReference type="PROSITE" id="PS00391">
    <property type="entry name" value="ATPASE_NA_K_BETA_2"/>
    <property type="match status" value="1"/>
</dbReference>
<name>AT1B4_HUMAN</name>
<evidence type="ECO:0000250" key="1"/>
<evidence type="ECO:0000255" key="2"/>
<evidence type="ECO:0000256" key="3">
    <source>
        <dbReference type="SAM" id="MobiDB-lite"/>
    </source>
</evidence>
<evidence type="ECO:0000269" key="4">
    <source>
    </source>
</evidence>
<evidence type="ECO:0000269" key="5">
    <source>
    </source>
</evidence>
<evidence type="ECO:0000269" key="6">
    <source>
    </source>
</evidence>
<evidence type="ECO:0000303" key="7">
    <source>
    </source>
</evidence>
<evidence type="ECO:0000305" key="8"/>
<feature type="chain" id="PRO_0000219122" description="Protein ATP1B4">
    <location>
        <begin position="1"/>
        <end position="357"/>
    </location>
</feature>
<feature type="topological domain" description="Nuclear" evidence="2">
    <location>
        <begin position="1"/>
        <end position="110"/>
    </location>
</feature>
<feature type="transmembrane region" description="Helical; Signal-anchor for type II membrane protein" evidence="2">
    <location>
        <begin position="111"/>
        <end position="131"/>
    </location>
</feature>
<feature type="topological domain" description="Perinuclear space" evidence="2">
    <location>
        <begin position="132"/>
        <end position="357"/>
    </location>
</feature>
<feature type="region of interest" description="Disordered" evidence="3">
    <location>
        <begin position="15"/>
        <end position="80"/>
    </location>
</feature>
<feature type="compositionally biased region" description="Acidic residues" evidence="3">
    <location>
        <begin position="52"/>
        <end position="73"/>
    </location>
</feature>
<feature type="splice variant" id="VSP_000351" description="In isoform B." evidence="7">
    <location>
        <begin position="107"/>
        <end position="110"/>
    </location>
</feature>
<feature type="sequence variant" id="VAR_055535" description="In dbSNP:rs2072452.">
    <original>V</original>
    <variation>A</variation>
    <location>
        <position position="48"/>
    </location>
</feature>
<gene>
    <name type="primary">ATP1B4</name>
</gene>